<name>APAG_CHRVO</name>
<reference key="1">
    <citation type="journal article" date="2003" name="Proc. Natl. Acad. Sci. U.S.A.">
        <title>The complete genome sequence of Chromobacterium violaceum reveals remarkable and exploitable bacterial adaptability.</title>
        <authorList>
            <person name="Vasconcelos A.T.R."/>
            <person name="de Almeida D.F."/>
            <person name="Hungria M."/>
            <person name="Guimaraes C.T."/>
            <person name="Antonio R.V."/>
            <person name="Almeida F.C."/>
            <person name="de Almeida L.G.P."/>
            <person name="de Almeida R."/>
            <person name="Alves-Gomes J.A."/>
            <person name="Andrade E.M."/>
            <person name="Araripe J."/>
            <person name="de Araujo M.F.F."/>
            <person name="Astolfi-Filho S."/>
            <person name="Azevedo V."/>
            <person name="Baptista A.J."/>
            <person name="Bataus L.A.M."/>
            <person name="Batista J.S."/>
            <person name="Belo A."/>
            <person name="van den Berg C."/>
            <person name="Bogo M."/>
            <person name="Bonatto S."/>
            <person name="Bordignon J."/>
            <person name="Brigido M.M."/>
            <person name="Brito C.A."/>
            <person name="Brocchi M."/>
            <person name="Burity H.A."/>
            <person name="Camargo A.A."/>
            <person name="Cardoso D.D.P."/>
            <person name="Carneiro N.P."/>
            <person name="Carraro D.M."/>
            <person name="Carvalho C.M.B."/>
            <person name="Cascardo J.C.M."/>
            <person name="Cavada B.S."/>
            <person name="Chueire L.M.O."/>
            <person name="Creczynski-Pasa T.B."/>
            <person name="Cunha-Junior N.C."/>
            <person name="Fagundes N."/>
            <person name="Falcao C.L."/>
            <person name="Fantinatti F."/>
            <person name="Farias I.P."/>
            <person name="Felipe M.S.S."/>
            <person name="Ferrari L.P."/>
            <person name="Ferro J.A."/>
            <person name="Ferro M.I.T."/>
            <person name="Franco G.R."/>
            <person name="Freitas N.S.A."/>
            <person name="Furlan L.R."/>
            <person name="Gazzinelli R.T."/>
            <person name="Gomes E.A."/>
            <person name="Goncalves P.R."/>
            <person name="Grangeiro T.B."/>
            <person name="Grattapaglia D."/>
            <person name="Grisard E.C."/>
            <person name="Hanna E.S."/>
            <person name="Jardim S.N."/>
            <person name="Laurino J."/>
            <person name="Leoi L.C.T."/>
            <person name="Lima L.F.A."/>
            <person name="Loureiro M.F."/>
            <person name="Lyra M.C.C.P."/>
            <person name="Madeira H.M.F."/>
            <person name="Manfio G.P."/>
            <person name="Maranhao A.Q."/>
            <person name="Martins W.S."/>
            <person name="di Mauro S.M.Z."/>
            <person name="de Medeiros S.R.B."/>
            <person name="Meissner R.V."/>
            <person name="Moreira M.A.M."/>
            <person name="Nascimento F.F."/>
            <person name="Nicolas M.F."/>
            <person name="Oliveira J.G."/>
            <person name="Oliveira S.C."/>
            <person name="Paixao R.F.C."/>
            <person name="Parente J.A."/>
            <person name="Pedrosa F.O."/>
            <person name="Pena S.D.J."/>
            <person name="Pereira J.O."/>
            <person name="Pereira M."/>
            <person name="Pinto L.S.R.C."/>
            <person name="Pinto L.S."/>
            <person name="Porto J.I.R."/>
            <person name="Potrich D.P."/>
            <person name="Ramalho-Neto C.E."/>
            <person name="Reis A.M.M."/>
            <person name="Rigo L.U."/>
            <person name="Rondinelli E."/>
            <person name="Santos E.B.P."/>
            <person name="Santos F.R."/>
            <person name="Schneider M.P.C."/>
            <person name="Seuanez H.N."/>
            <person name="Silva A.M.R."/>
            <person name="da Silva A.L.C."/>
            <person name="Silva D.W."/>
            <person name="Silva R."/>
            <person name="Simoes I.C."/>
            <person name="Simon D."/>
            <person name="Soares C.M.A."/>
            <person name="Soares R.B.A."/>
            <person name="Souza E.M."/>
            <person name="Souza K.R.L."/>
            <person name="Souza R.C."/>
            <person name="Steffens M.B.R."/>
            <person name="Steindel M."/>
            <person name="Teixeira S.R."/>
            <person name="Urmenyi T."/>
            <person name="Vettore A."/>
            <person name="Wassem R."/>
            <person name="Zaha A."/>
            <person name="Simpson A.J.G."/>
        </authorList>
    </citation>
    <scope>NUCLEOTIDE SEQUENCE [LARGE SCALE GENOMIC DNA]</scope>
    <source>
        <strain>ATCC 12472 / DSM 30191 / JCM 1249 / CCUG 213 / NBRC 12614 / NCIMB 9131 / NCTC 9757 / MK</strain>
    </source>
</reference>
<sequence length="126" mass="14106">MADKLYQMEVQAEPQYVAEQSSVANDVYVFAYRVRITNTGSEPAQLISRHWIITDANQQVQEVRGMGVVGEQPHLDPGQVFEYSSAAHITTPYGSMKGAYQMMADDGRRFEASIPEMTLVAPRVLH</sequence>
<accession>Q7NW07</accession>
<proteinExistence type="inferred from homology"/>
<dbReference type="EMBL" id="AE016825">
    <property type="protein sequence ID" value="AAQ59856.1"/>
    <property type="molecule type" value="Genomic_DNA"/>
</dbReference>
<dbReference type="RefSeq" id="WP_011135731.1">
    <property type="nucleotide sequence ID" value="NC_005085.1"/>
</dbReference>
<dbReference type="SMR" id="Q7NW07"/>
<dbReference type="STRING" id="243365.CV_2183"/>
<dbReference type="GeneID" id="66367791"/>
<dbReference type="KEGG" id="cvi:CV_2183"/>
<dbReference type="eggNOG" id="COG2967">
    <property type="taxonomic scope" value="Bacteria"/>
</dbReference>
<dbReference type="HOGENOM" id="CLU_128074_0_0_4"/>
<dbReference type="OrthoDB" id="9795226at2"/>
<dbReference type="Proteomes" id="UP000001424">
    <property type="component" value="Chromosome"/>
</dbReference>
<dbReference type="GO" id="GO:0070987">
    <property type="term" value="P:error-free translesion synthesis"/>
    <property type="evidence" value="ECO:0007669"/>
    <property type="project" value="TreeGrafter"/>
</dbReference>
<dbReference type="Gene3D" id="2.60.40.1470">
    <property type="entry name" value="ApaG domain"/>
    <property type="match status" value="1"/>
</dbReference>
<dbReference type="HAMAP" id="MF_00791">
    <property type="entry name" value="ApaG"/>
    <property type="match status" value="1"/>
</dbReference>
<dbReference type="InterPro" id="IPR007474">
    <property type="entry name" value="ApaG_domain"/>
</dbReference>
<dbReference type="InterPro" id="IPR036767">
    <property type="entry name" value="ApaG_sf"/>
</dbReference>
<dbReference type="InterPro" id="IPR023065">
    <property type="entry name" value="Uncharacterised_ApaG"/>
</dbReference>
<dbReference type="NCBIfam" id="NF003967">
    <property type="entry name" value="PRK05461.1"/>
    <property type="match status" value="1"/>
</dbReference>
<dbReference type="PANTHER" id="PTHR14289">
    <property type="entry name" value="F-BOX ONLY PROTEIN 3"/>
    <property type="match status" value="1"/>
</dbReference>
<dbReference type="PANTHER" id="PTHR14289:SF16">
    <property type="entry name" value="POLYMERASE DELTA-INTERACTING PROTEIN 2"/>
    <property type="match status" value="1"/>
</dbReference>
<dbReference type="Pfam" id="PF04379">
    <property type="entry name" value="DUF525"/>
    <property type="match status" value="1"/>
</dbReference>
<dbReference type="SUPFAM" id="SSF110069">
    <property type="entry name" value="ApaG-like"/>
    <property type="match status" value="1"/>
</dbReference>
<dbReference type="PROSITE" id="PS51087">
    <property type="entry name" value="APAG"/>
    <property type="match status" value="1"/>
</dbReference>
<feature type="chain" id="PRO_0000197945" description="Protein ApaG">
    <location>
        <begin position="1"/>
        <end position="126"/>
    </location>
</feature>
<feature type="domain" description="ApaG" evidence="1">
    <location>
        <begin position="2"/>
        <end position="126"/>
    </location>
</feature>
<gene>
    <name evidence="1" type="primary">apaG</name>
    <name type="ordered locus">CV_2183</name>
</gene>
<evidence type="ECO:0000255" key="1">
    <source>
        <dbReference type="HAMAP-Rule" id="MF_00791"/>
    </source>
</evidence>
<organism>
    <name type="scientific">Chromobacterium violaceum (strain ATCC 12472 / DSM 30191 / JCM 1249 / CCUG 213 / NBRC 12614 / NCIMB 9131 / NCTC 9757 / MK)</name>
    <dbReference type="NCBI Taxonomy" id="243365"/>
    <lineage>
        <taxon>Bacteria</taxon>
        <taxon>Pseudomonadati</taxon>
        <taxon>Pseudomonadota</taxon>
        <taxon>Betaproteobacteria</taxon>
        <taxon>Neisseriales</taxon>
        <taxon>Chromobacteriaceae</taxon>
        <taxon>Chromobacterium</taxon>
    </lineage>
</organism>
<protein>
    <recommendedName>
        <fullName evidence="1">Protein ApaG</fullName>
    </recommendedName>
</protein>
<keyword id="KW-1185">Reference proteome</keyword>